<accession>A1JL31</accession>
<dbReference type="EC" id="3.6.1.-" evidence="1"/>
<dbReference type="EMBL" id="AM286415">
    <property type="protein sequence ID" value="CAL11255.1"/>
    <property type="molecule type" value="Genomic_DNA"/>
</dbReference>
<dbReference type="RefSeq" id="WP_011815831.1">
    <property type="nucleotide sequence ID" value="NC_008800.1"/>
</dbReference>
<dbReference type="RefSeq" id="YP_001005488.1">
    <property type="nucleotide sequence ID" value="NC_008800.1"/>
</dbReference>
<dbReference type="SMR" id="A1JL31"/>
<dbReference type="KEGG" id="yen:YE1161"/>
<dbReference type="PATRIC" id="fig|393305.7.peg.1267"/>
<dbReference type="eggNOG" id="COG0494">
    <property type="taxonomic scope" value="Bacteria"/>
</dbReference>
<dbReference type="HOGENOM" id="CLU_062658_6_0_6"/>
<dbReference type="OrthoDB" id="5292471at2"/>
<dbReference type="Proteomes" id="UP000000642">
    <property type="component" value="Chromosome"/>
</dbReference>
<dbReference type="GO" id="GO:0005829">
    <property type="term" value="C:cytosol"/>
    <property type="evidence" value="ECO:0007669"/>
    <property type="project" value="TreeGrafter"/>
</dbReference>
<dbReference type="GO" id="GO:0016818">
    <property type="term" value="F:hydrolase activity, acting on acid anhydrides, in phosphorus-containing anhydrides"/>
    <property type="evidence" value="ECO:0007669"/>
    <property type="project" value="InterPro"/>
</dbReference>
<dbReference type="GO" id="GO:0046872">
    <property type="term" value="F:metal ion binding"/>
    <property type="evidence" value="ECO:0007669"/>
    <property type="project" value="UniProtKB-KW"/>
</dbReference>
<dbReference type="GO" id="GO:0006753">
    <property type="term" value="P:nucleoside phosphate metabolic process"/>
    <property type="evidence" value="ECO:0007669"/>
    <property type="project" value="TreeGrafter"/>
</dbReference>
<dbReference type="GO" id="GO:0019693">
    <property type="term" value="P:ribose phosphate metabolic process"/>
    <property type="evidence" value="ECO:0007669"/>
    <property type="project" value="TreeGrafter"/>
</dbReference>
<dbReference type="CDD" id="cd24157">
    <property type="entry name" value="NUDIX_GDPMK"/>
    <property type="match status" value="1"/>
</dbReference>
<dbReference type="FunFam" id="3.90.79.10:FF:000010">
    <property type="entry name" value="GDP-mannose pyrophosphatase NudK"/>
    <property type="match status" value="1"/>
</dbReference>
<dbReference type="Gene3D" id="3.90.79.10">
    <property type="entry name" value="Nucleoside Triphosphate Pyrophosphohydrolase"/>
    <property type="match status" value="1"/>
</dbReference>
<dbReference type="InterPro" id="IPR004385">
    <property type="entry name" value="NDP_pyrophosphatase"/>
</dbReference>
<dbReference type="InterPro" id="IPR015797">
    <property type="entry name" value="NUDIX_hydrolase-like_dom_sf"/>
</dbReference>
<dbReference type="InterPro" id="IPR000086">
    <property type="entry name" value="NUDIX_hydrolase_dom"/>
</dbReference>
<dbReference type="NCBIfam" id="TIGR00052">
    <property type="entry name" value="nudix-type nucleoside diphosphatase, YffH/AdpP family"/>
    <property type="match status" value="1"/>
</dbReference>
<dbReference type="NCBIfam" id="NF011585">
    <property type="entry name" value="PRK15009.1"/>
    <property type="match status" value="1"/>
</dbReference>
<dbReference type="PANTHER" id="PTHR11839:SF18">
    <property type="entry name" value="NUDIX HYDROLASE DOMAIN-CONTAINING PROTEIN"/>
    <property type="match status" value="1"/>
</dbReference>
<dbReference type="PANTHER" id="PTHR11839">
    <property type="entry name" value="UDP/ADP-SUGAR PYROPHOSPHATASE"/>
    <property type="match status" value="1"/>
</dbReference>
<dbReference type="Pfam" id="PF00293">
    <property type="entry name" value="NUDIX"/>
    <property type="match status" value="1"/>
</dbReference>
<dbReference type="SUPFAM" id="SSF55811">
    <property type="entry name" value="Nudix"/>
    <property type="match status" value="1"/>
</dbReference>
<dbReference type="PROSITE" id="PS51462">
    <property type="entry name" value="NUDIX"/>
    <property type="match status" value="1"/>
</dbReference>
<comment type="function">
    <text evidence="1">Nucleoside diphosphate sugar hydrolase that hydrolyzes GDP-mannose as its preferred substrate, yielding GMP and mannose-1-phosphate.</text>
</comment>
<comment type="catalytic activity">
    <reaction evidence="1">
        <text>GDP-alpha-D-mannose + H2O = alpha-D-mannose 1-phosphate + GMP + 2 H(+)</text>
        <dbReference type="Rhea" id="RHEA:27978"/>
        <dbReference type="ChEBI" id="CHEBI:15377"/>
        <dbReference type="ChEBI" id="CHEBI:15378"/>
        <dbReference type="ChEBI" id="CHEBI:57527"/>
        <dbReference type="ChEBI" id="CHEBI:58115"/>
        <dbReference type="ChEBI" id="CHEBI:58409"/>
    </reaction>
</comment>
<comment type="cofactor">
    <cofactor evidence="1">
        <name>Mg(2+)</name>
        <dbReference type="ChEBI" id="CHEBI:18420"/>
    </cofactor>
</comment>
<comment type="subunit">
    <text evidence="1">Homodimer.</text>
</comment>
<comment type="domain">
    <text evidence="1">In the dimer, the N-terminal domains are swapped between the two monomers, such that residues of both chains contribute to the active site.</text>
</comment>
<comment type="similarity">
    <text evidence="3">Belongs to the Nudix hydrolase family. NudK subfamily.</text>
</comment>
<organism>
    <name type="scientific">Yersinia enterocolitica serotype O:8 / biotype 1B (strain NCTC 13174 / 8081)</name>
    <dbReference type="NCBI Taxonomy" id="393305"/>
    <lineage>
        <taxon>Bacteria</taxon>
        <taxon>Pseudomonadati</taxon>
        <taxon>Pseudomonadota</taxon>
        <taxon>Gammaproteobacteria</taxon>
        <taxon>Enterobacterales</taxon>
        <taxon>Yersiniaceae</taxon>
        <taxon>Yersinia</taxon>
    </lineage>
</organism>
<proteinExistence type="inferred from homology"/>
<evidence type="ECO:0000250" key="1">
    <source>
        <dbReference type="UniProtKB" id="P37128"/>
    </source>
</evidence>
<evidence type="ECO:0000255" key="2">
    <source>
        <dbReference type="PROSITE-ProRule" id="PRU00794"/>
    </source>
</evidence>
<evidence type="ECO:0000305" key="3"/>
<sequence length="191" mass="21596">MSVKIENIRSELLSKNWFKLHKYTFDLIDDNGTSVQQIREVYDRGNGATILLYNRPNGTVLLINQFRMPTYVNGNPDGMLLETCAGLLDNDSPEECIRREAMEETGYQVDSVQKLFEAYMSPGGVTEIIHFFAAEYHADQKVTDDVGVEDEVIEVVELPFTEAIAMIADGRIKDGKTIMLLQYAQIHGLLK</sequence>
<keyword id="KW-0378">Hydrolase</keyword>
<keyword id="KW-0460">Magnesium</keyword>
<keyword id="KW-0479">Metal-binding</keyword>
<reference key="1">
    <citation type="journal article" date="2006" name="PLoS Genet.">
        <title>The complete genome sequence and comparative genome analysis of the high pathogenicity Yersinia enterocolitica strain 8081.</title>
        <authorList>
            <person name="Thomson N.R."/>
            <person name="Howard S."/>
            <person name="Wren B.W."/>
            <person name="Holden M.T.G."/>
            <person name="Crossman L."/>
            <person name="Challis G.L."/>
            <person name="Churcher C."/>
            <person name="Mungall K."/>
            <person name="Brooks K."/>
            <person name="Chillingworth T."/>
            <person name="Feltwell T."/>
            <person name="Abdellah Z."/>
            <person name="Hauser H."/>
            <person name="Jagels K."/>
            <person name="Maddison M."/>
            <person name="Moule S."/>
            <person name="Sanders M."/>
            <person name="Whitehead S."/>
            <person name="Quail M.A."/>
            <person name="Dougan G."/>
            <person name="Parkhill J."/>
            <person name="Prentice M.B."/>
        </authorList>
    </citation>
    <scope>NUCLEOTIDE SEQUENCE [LARGE SCALE GENOMIC DNA]</scope>
    <source>
        <strain>NCTC 13174 / 8081</strain>
    </source>
</reference>
<name>NUDK_YERE8</name>
<gene>
    <name type="primary">nudK</name>
    <name type="ordered locus">YE1161</name>
</gene>
<protein>
    <recommendedName>
        <fullName>GDP-mannose pyrophosphatase</fullName>
        <ecNumber evidence="1">3.6.1.-</ecNumber>
    </recommendedName>
    <alternativeName>
        <fullName>GDP-mannose hydrolase</fullName>
    </alternativeName>
    <alternativeName>
        <fullName>GDPMK</fullName>
    </alternativeName>
</protein>
<feature type="chain" id="PRO_0000342505" description="GDP-mannose pyrophosphatase">
    <location>
        <begin position="1"/>
        <end position="191"/>
    </location>
</feature>
<feature type="domain" description="Nudix hydrolase" evidence="2">
    <location>
        <begin position="43"/>
        <end position="180"/>
    </location>
</feature>
<feature type="short sequence motif" description="Nudix box">
    <location>
        <begin position="86"/>
        <end position="106"/>
    </location>
</feature>
<feature type="binding site" evidence="1">
    <location>
        <begin position="38"/>
        <end position="40"/>
    </location>
    <ligand>
        <name>GDP-alpha-D-mannose</name>
        <dbReference type="ChEBI" id="CHEBI:57527"/>
        <note>ligand shared between dimeric partners</note>
    </ligand>
</feature>
<feature type="binding site" description="in other chain" evidence="1">
    <location>
        <position position="67"/>
    </location>
    <ligand>
        <name>GDP-alpha-D-mannose</name>
        <dbReference type="ChEBI" id="CHEBI:57527"/>
        <note>ligand shared between dimeric partners</note>
    </ligand>
</feature>
<feature type="binding site" description="in other chain" evidence="1">
    <location>
        <begin position="85"/>
        <end position="87"/>
    </location>
    <ligand>
        <name>GDP-alpha-D-mannose</name>
        <dbReference type="ChEBI" id="CHEBI:57527"/>
        <note>ligand shared between dimeric partners</note>
    </ligand>
</feature>
<feature type="binding site" evidence="1">
    <location>
        <position position="85"/>
    </location>
    <ligand>
        <name>Mg(2+)</name>
        <dbReference type="ChEBI" id="CHEBI:18420"/>
        <label>1</label>
    </ligand>
</feature>
<feature type="binding site" evidence="1">
    <location>
        <position position="100"/>
    </location>
    <ligand>
        <name>Mg(2+)</name>
        <dbReference type="ChEBI" id="CHEBI:18420"/>
        <label>2</label>
    </ligand>
</feature>
<feature type="binding site" description="in other chain" evidence="1">
    <location>
        <position position="104"/>
    </location>
    <ligand>
        <name>GDP-alpha-D-mannose</name>
        <dbReference type="ChEBI" id="CHEBI:57527"/>
        <note>ligand shared between dimeric partners</note>
    </ligand>
</feature>
<feature type="binding site" evidence="1">
    <location>
        <position position="104"/>
    </location>
    <ligand>
        <name>Mg(2+)</name>
        <dbReference type="ChEBI" id="CHEBI:18420"/>
        <label>1</label>
    </ligand>
</feature>
<feature type="binding site" evidence="1">
    <location>
        <position position="104"/>
    </location>
    <ligand>
        <name>Mg(2+)</name>
        <dbReference type="ChEBI" id="CHEBI:18420"/>
        <label>2</label>
    </ligand>
</feature>
<feature type="binding site" description="in other chain" evidence="1">
    <location>
        <position position="127"/>
    </location>
    <ligand>
        <name>GDP-alpha-D-mannose</name>
        <dbReference type="ChEBI" id="CHEBI:57527"/>
        <note>ligand shared between dimeric partners</note>
    </ligand>
</feature>
<feature type="binding site" description="in other chain" evidence="1">
    <location>
        <begin position="150"/>
        <end position="151"/>
    </location>
    <ligand>
        <name>GDP-alpha-D-mannose</name>
        <dbReference type="ChEBI" id="CHEBI:57527"/>
        <note>ligand shared between dimeric partners</note>
    </ligand>
</feature>
<feature type="binding site" evidence="1">
    <location>
        <position position="151"/>
    </location>
    <ligand>
        <name>Mg(2+)</name>
        <dbReference type="ChEBI" id="CHEBI:18420"/>
        <label>2</label>
    </ligand>
</feature>
<feature type="binding site" description="in other chain" evidence="1">
    <location>
        <position position="176"/>
    </location>
    <ligand>
        <name>GDP-alpha-D-mannose</name>
        <dbReference type="ChEBI" id="CHEBI:57527"/>
        <note>ligand shared between dimeric partners</note>
    </ligand>
</feature>